<reference key="1">
    <citation type="journal article" date="2006" name="Proc. Natl. Acad. Sci. U.S.A.">
        <title>Comparative genomics of the lactic acid bacteria.</title>
        <authorList>
            <person name="Makarova K.S."/>
            <person name="Slesarev A."/>
            <person name="Wolf Y.I."/>
            <person name="Sorokin A."/>
            <person name="Mirkin B."/>
            <person name="Koonin E.V."/>
            <person name="Pavlov A."/>
            <person name="Pavlova N."/>
            <person name="Karamychev V."/>
            <person name="Polouchine N."/>
            <person name="Shakhova V."/>
            <person name="Grigoriev I."/>
            <person name="Lou Y."/>
            <person name="Rohksar D."/>
            <person name="Lucas S."/>
            <person name="Huang K."/>
            <person name="Goodstein D.M."/>
            <person name="Hawkins T."/>
            <person name="Plengvidhya V."/>
            <person name="Welker D."/>
            <person name="Hughes J."/>
            <person name="Goh Y."/>
            <person name="Benson A."/>
            <person name="Baldwin K."/>
            <person name="Lee J.-H."/>
            <person name="Diaz-Muniz I."/>
            <person name="Dosti B."/>
            <person name="Smeianov V."/>
            <person name="Wechter W."/>
            <person name="Barabote R."/>
            <person name="Lorca G."/>
            <person name="Altermann E."/>
            <person name="Barrangou R."/>
            <person name="Ganesan B."/>
            <person name="Xie Y."/>
            <person name="Rawsthorne H."/>
            <person name="Tamir D."/>
            <person name="Parker C."/>
            <person name="Breidt F."/>
            <person name="Broadbent J.R."/>
            <person name="Hutkins R."/>
            <person name="O'Sullivan D."/>
            <person name="Steele J."/>
            <person name="Unlu G."/>
            <person name="Saier M.H. Jr."/>
            <person name="Klaenhammer T."/>
            <person name="Richardson P."/>
            <person name="Kozyavkin S."/>
            <person name="Weimer B.C."/>
            <person name="Mills D.A."/>
        </authorList>
    </citation>
    <scope>NUCLEOTIDE SEQUENCE [LARGE SCALE GENOMIC DNA]</scope>
    <source>
        <strain>ATCC BAA-491 / LMD-9</strain>
    </source>
</reference>
<gene>
    <name evidence="1" type="primary">rpsI</name>
    <name type="ordered locus">STER_0128</name>
</gene>
<feature type="chain" id="PRO_1000051350" description="Small ribosomal subunit protein uS9">
    <location>
        <begin position="1"/>
        <end position="130"/>
    </location>
</feature>
<proteinExistence type="inferred from homology"/>
<name>RS9_STRTD</name>
<comment type="similarity">
    <text evidence="1">Belongs to the universal ribosomal protein uS9 family.</text>
</comment>
<sequence>MAQAQYAGTGRRKNAVARVRLVPGTGKITVNKKDLEEYIPHADLRLVINQPFAVTSTEGSYDVHVNVVGGGYAGQSGAIRHGIARALLQVDPDFRDSLKRAGLLTRDARMVERKKPGLKKARKASQFSKR</sequence>
<evidence type="ECO:0000255" key="1">
    <source>
        <dbReference type="HAMAP-Rule" id="MF_00532"/>
    </source>
</evidence>
<evidence type="ECO:0000305" key="2"/>
<keyword id="KW-0687">Ribonucleoprotein</keyword>
<keyword id="KW-0689">Ribosomal protein</keyword>
<dbReference type="EMBL" id="CP000419">
    <property type="protein sequence ID" value="ABJ65477.1"/>
    <property type="molecule type" value="Genomic_DNA"/>
</dbReference>
<dbReference type="RefSeq" id="WP_002947796.1">
    <property type="nucleotide sequence ID" value="NC_008532.1"/>
</dbReference>
<dbReference type="SMR" id="Q03MU5"/>
<dbReference type="GeneID" id="66898024"/>
<dbReference type="KEGG" id="ste:STER_0128"/>
<dbReference type="HOGENOM" id="CLU_046483_2_1_9"/>
<dbReference type="GO" id="GO:0022627">
    <property type="term" value="C:cytosolic small ribosomal subunit"/>
    <property type="evidence" value="ECO:0007669"/>
    <property type="project" value="TreeGrafter"/>
</dbReference>
<dbReference type="GO" id="GO:0003723">
    <property type="term" value="F:RNA binding"/>
    <property type="evidence" value="ECO:0007669"/>
    <property type="project" value="TreeGrafter"/>
</dbReference>
<dbReference type="GO" id="GO:0003735">
    <property type="term" value="F:structural constituent of ribosome"/>
    <property type="evidence" value="ECO:0007669"/>
    <property type="project" value="InterPro"/>
</dbReference>
<dbReference type="GO" id="GO:0006412">
    <property type="term" value="P:translation"/>
    <property type="evidence" value="ECO:0007669"/>
    <property type="project" value="UniProtKB-UniRule"/>
</dbReference>
<dbReference type="FunFam" id="3.30.230.10:FF:000001">
    <property type="entry name" value="30S ribosomal protein S9"/>
    <property type="match status" value="1"/>
</dbReference>
<dbReference type="Gene3D" id="3.30.230.10">
    <property type="match status" value="1"/>
</dbReference>
<dbReference type="HAMAP" id="MF_00532_B">
    <property type="entry name" value="Ribosomal_uS9_B"/>
    <property type="match status" value="1"/>
</dbReference>
<dbReference type="InterPro" id="IPR020568">
    <property type="entry name" value="Ribosomal_Su5_D2-typ_SF"/>
</dbReference>
<dbReference type="InterPro" id="IPR000754">
    <property type="entry name" value="Ribosomal_uS9"/>
</dbReference>
<dbReference type="InterPro" id="IPR023035">
    <property type="entry name" value="Ribosomal_uS9_bac/plastid"/>
</dbReference>
<dbReference type="InterPro" id="IPR020574">
    <property type="entry name" value="Ribosomal_uS9_CS"/>
</dbReference>
<dbReference type="InterPro" id="IPR014721">
    <property type="entry name" value="Ribsml_uS5_D2-typ_fold_subgr"/>
</dbReference>
<dbReference type="NCBIfam" id="NF001099">
    <property type="entry name" value="PRK00132.1"/>
    <property type="match status" value="1"/>
</dbReference>
<dbReference type="PANTHER" id="PTHR21569">
    <property type="entry name" value="RIBOSOMAL PROTEIN S9"/>
    <property type="match status" value="1"/>
</dbReference>
<dbReference type="PANTHER" id="PTHR21569:SF1">
    <property type="entry name" value="SMALL RIBOSOMAL SUBUNIT PROTEIN US9M"/>
    <property type="match status" value="1"/>
</dbReference>
<dbReference type="Pfam" id="PF00380">
    <property type="entry name" value="Ribosomal_S9"/>
    <property type="match status" value="1"/>
</dbReference>
<dbReference type="SUPFAM" id="SSF54211">
    <property type="entry name" value="Ribosomal protein S5 domain 2-like"/>
    <property type="match status" value="1"/>
</dbReference>
<dbReference type="PROSITE" id="PS00360">
    <property type="entry name" value="RIBOSOMAL_S9"/>
    <property type="match status" value="1"/>
</dbReference>
<protein>
    <recommendedName>
        <fullName evidence="1">Small ribosomal subunit protein uS9</fullName>
    </recommendedName>
    <alternativeName>
        <fullName evidence="2">30S ribosomal protein S9</fullName>
    </alternativeName>
</protein>
<accession>Q03MU5</accession>
<organism>
    <name type="scientific">Streptococcus thermophilus (strain ATCC BAA-491 / LMD-9)</name>
    <dbReference type="NCBI Taxonomy" id="322159"/>
    <lineage>
        <taxon>Bacteria</taxon>
        <taxon>Bacillati</taxon>
        <taxon>Bacillota</taxon>
        <taxon>Bacilli</taxon>
        <taxon>Lactobacillales</taxon>
        <taxon>Streptococcaceae</taxon>
        <taxon>Streptococcus</taxon>
    </lineage>
</organism>